<proteinExistence type="inferred from homology"/>
<organism>
    <name type="scientific">Shouchella clausii (strain KSM-K16)</name>
    <name type="common">Alkalihalobacillus clausii</name>
    <dbReference type="NCBI Taxonomy" id="66692"/>
    <lineage>
        <taxon>Bacteria</taxon>
        <taxon>Bacillati</taxon>
        <taxon>Bacillota</taxon>
        <taxon>Bacilli</taxon>
        <taxon>Bacillales</taxon>
        <taxon>Bacillaceae</taxon>
        <taxon>Shouchella</taxon>
    </lineage>
</organism>
<sequence length="147" mass="15978">MKVIFTEDVKGKGKKGELKDVSEGYARNYLIPKNLAVAATSGNIKDLEAQEKSKQKKAEAELQKAKAMKEELEALKIEIPAKAGEGGRLFGAVSTKQIAEALGKQGKKVDKRKIQLDEPIRSLGYTKVPIKIHPEVVATATVHVVEA</sequence>
<comment type="function">
    <text evidence="1">Binds to the 23S rRNA.</text>
</comment>
<comment type="similarity">
    <text evidence="1">Belongs to the bacterial ribosomal protein bL9 family.</text>
</comment>
<protein>
    <recommendedName>
        <fullName evidence="1">Large ribosomal subunit protein bL9</fullName>
    </recommendedName>
    <alternativeName>
        <fullName evidence="2">50S ribosomal protein L9</fullName>
    </alternativeName>
</protein>
<reference key="1">
    <citation type="submission" date="2003-10" db="EMBL/GenBank/DDBJ databases">
        <title>The complete genome sequence of the alkaliphilic Bacillus clausii KSM-K16.</title>
        <authorList>
            <person name="Takaki Y."/>
            <person name="Kageyama Y."/>
            <person name="Shimamura S."/>
            <person name="Suzuki H."/>
            <person name="Nishi S."/>
            <person name="Hatada Y."/>
            <person name="Kawai S."/>
            <person name="Ito S."/>
            <person name="Horikoshi K."/>
        </authorList>
    </citation>
    <scope>NUCLEOTIDE SEQUENCE [LARGE SCALE GENOMIC DNA]</scope>
    <source>
        <strain>KSM-K16</strain>
    </source>
</reference>
<name>RL9_SHOC1</name>
<dbReference type="EMBL" id="AP006627">
    <property type="protein sequence ID" value="BAD66633.1"/>
    <property type="molecule type" value="Genomic_DNA"/>
</dbReference>
<dbReference type="RefSeq" id="WP_011248935.1">
    <property type="nucleotide sequence ID" value="NC_006582.1"/>
</dbReference>
<dbReference type="SMR" id="Q5WAH8"/>
<dbReference type="STRING" id="66692.ABC4102"/>
<dbReference type="KEGG" id="bcl:ABC4102"/>
<dbReference type="eggNOG" id="COG0359">
    <property type="taxonomic scope" value="Bacteria"/>
</dbReference>
<dbReference type="HOGENOM" id="CLU_078938_3_2_9"/>
<dbReference type="OrthoDB" id="9788336at2"/>
<dbReference type="Proteomes" id="UP000001168">
    <property type="component" value="Chromosome"/>
</dbReference>
<dbReference type="GO" id="GO:1990904">
    <property type="term" value="C:ribonucleoprotein complex"/>
    <property type="evidence" value="ECO:0007669"/>
    <property type="project" value="UniProtKB-KW"/>
</dbReference>
<dbReference type="GO" id="GO:0005840">
    <property type="term" value="C:ribosome"/>
    <property type="evidence" value="ECO:0007669"/>
    <property type="project" value="UniProtKB-KW"/>
</dbReference>
<dbReference type="GO" id="GO:0019843">
    <property type="term" value="F:rRNA binding"/>
    <property type="evidence" value="ECO:0007669"/>
    <property type="project" value="UniProtKB-UniRule"/>
</dbReference>
<dbReference type="GO" id="GO:0003735">
    <property type="term" value="F:structural constituent of ribosome"/>
    <property type="evidence" value="ECO:0007669"/>
    <property type="project" value="InterPro"/>
</dbReference>
<dbReference type="GO" id="GO:0006412">
    <property type="term" value="P:translation"/>
    <property type="evidence" value="ECO:0007669"/>
    <property type="project" value="UniProtKB-UniRule"/>
</dbReference>
<dbReference type="FunFam" id="3.10.430.100:FF:000002">
    <property type="entry name" value="50S ribosomal protein L9"/>
    <property type="match status" value="1"/>
</dbReference>
<dbReference type="FunFam" id="3.40.5.10:FF:000002">
    <property type="entry name" value="50S ribosomal protein L9"/>
    <property type="match status" value="1"/>
</dbReference>
<dbReference type="Gene3D" id="3.10.430.100">
    <property type="entry name" value="Ribosomal protein L9, C-terminal domain"/>
    <property type="match status" value="1"/>
</dbReference>
<dbReference type="Gene3D" id="3.40.5.10">
    <property type="entry name" value="Ribosomal protein L9, N-terminal domain"/>
    <property type="match status" value="1"/>
</dbReference>
<dbReference type="HAMAP" id="MF_00503">
    <property type="entry name" value="Ribosomal_bL9"/>
    <property type="match status" value="1"/>
</dbReference>
<dbReference type="InterPro" id="IPR000244">
    <property type="entry name" value="Ribosomal_bL9"/>
</dbReference>
<dbReference type="InterPro" id="IPR009027">
    <property type="entry name" value="Ribosomal_bL9/RNase_H1_N"/>
</dbReference>
<dbReference type="InterPro" id="IPR020594">
    <property type="entry name" value="Ribosomal_bL9_bac/chp"/>
</dbReference>
<dbReference type="InterPro" id="IPR020069">
    <property type="entry name" value="Ribosomal_bL9_C"/>
</dbReference>
<dbReference type="InterPro" id="IPR036791">
    <property type="entry name" value="Ribosomal_bL9_C_sf"/>
</dbReference>
<dbReference type="InterPro" id="IPR020070">
    <property type="entry name" value="Ribosomal_bL9_N"/>
</dbReference>
<dbReference type="InterPro" id="IPR036935">
    <property type="entry name" value="Ribosomal_bL9_N_sf"/>
</dbReference>
<dbReference type="NCBIfam" id="TIGR00158">
    <property type="entry name" value="L9"/>
    <property type="match status" value="1"/>
</dbReference>
<dbReference type="PANTHER" id="PTHR21368">
    <property type="entry name" value="50S RIBOSOMAL PROTEIN L9"/>
    <property type="match status" value="1"/>
</dbReference>
<dbReference type="Pfam" id="PF03948">
    <property type="entry name" value="Ribosomal_L9_C"/>
    <property type="match status" value="1"/>
</dbReference>
<dbReference type="Pfam" id="PF01281">
    <property type="entry name" value="Ribosomal_L9_N"/>
    <property type="match status" value="1"/>
</dbReference>
<dbReference type="SUPFAM" id="SSF55658">
    <property type="entry name" value="L9 N-domain-like"/>
    <property type="match status" value="1"/>
</dbReference>
<dbReference type="SUPFAM" id="SSF55653">
    <property type="entry name" value="Ribosomal protein L9 C-domain"/>
    <property type="match status" value="1"/>
</dbReference>
<dbReference type="PROSITE" id="PS00651">
    <property type="entry name" value="RIBOSOMAL_L9"/>
    <property type="match status" value="1"/>
</dbReference>
<gene>
    <name evidence="1" type="primary">rplI</name>
    <name type="ordered locus">ABC4102</name>
</gene>
<accession>Q5WAH8</accession>
<evidence type="ECO:0000255" key="1">
    <source>
        <dbReference type="HAMAP-Rule" id="MF_00503"/>
    </source>
</evidence>
<evidence type="ECO:0000305" key="2"/>
<keyword id="KW-1185">Reference proteome</keyword>
<keyword id="KW-0687">Ribonucleoprotein</keyword>
<keyword id="KW-0689">Ribosomal protein</keyword>
<keyword id="KW-0694">RNA-binding</keyword>
<keyword id="KW-0699">rRNA-binding</keyword>
<feature type="chain" id="PRO_0000236477" description="Large ribosomal subunit protein bL9">
    <location>
        <begin position="1"/>
        <end position="147"/>
    </location>
</feature>